<accession>A0A0J9VGQ5</accession>
<accession>Q5YCX0</accession>
<comment type="function">
    <text evidence="4 7">Polymerizes chitin, a structural polymer of the cell wall and septum, by transferring the sugar moiety of UDP-GlcNAc to the non-reducing end of the growing chitin polymer (Probable). Plays a critical role in cell wall integrity and virulence (PubMed:15470098).</text>
</comment>
<comment type="catalytic activity">
    <reaction evidence="7">
        <text>[(1-&gt;4)-N-acetyl-beta-D-glucosaminyl](n) + UDP-N-acetyl-alpha-D-glucosamine = [(1-&gt;4)-N-acetyl-beta-D-glucosaminyl](n+1) + UDP + H(+)</text>
        <dbReference type="Rhea" id="RHEA:16637"/>
        <dbReference type="Rhea" id="RHEA-COMP:9593"/>
        <dbReference type="Rhea" id="RHEA-COMP:9595"/>
        <dbReference type="ChEBI" id="CHEBI:15378"/>
        <dbReference type="ChEBI" id="CHEBI:17029"/>
        <dbReference type="ChEBI" id="CHEBI:57705"/>
        <dbReference type="ChEBI" id="CHEBI:58223"/>
        <dbReference type="EC" id="2.4.1.16"/>
    </reaction>
    <physiologicalReaction direction="left-to-right" evidence="7">
        <dbReference type="Rhea" id="RHEA:16638"/>
    </physiologicalReaction>
</comment>
<comment type="subcellular location">
    <subcellularLocation>
        <location evidence="6">Cell membrane</location>
        <topology evidence="1">Multi-pass membrane protein</topology>
    </subcellularLocation>
</comment>
<comment type="disruption phenotype">
    <text evidence="4">Reduces the chitin content by about 10% (PubMed:15470098). Does not affect conidiation nor nuclear distribution, but leads to increased hyphal hydrophobicity and to reduced virulence on tomato plants (PubMed:15470098). Strongly increases sentivity to the detergent SDS (PubMed:15470098).</text>
</comment>
<comment type="similarity">
    <text evidence="6">Belongs to the chitin synthase family. Class II subfamily.</text>
</comment>
<comment type="sequence caution" evidence="6">
    <conflict type="erroneous initiation">
        <sequence resource="EMBL-CDS" id="AAT77182"/>
    </conflict>
    <text>Truncated N-terminus.</text>
</comment>
<dbReference type="EC" id="2.4.1.16" evidence="7"/>
<dbReference type="EMBL" id="AY572422">
    <property type="protein sequence ID" value="AAT77182.1"/>
    <property type="status" value="ALT_INIT"/>
    <property type="molecule type" value="Genomic_DNA"/>
</dbReference>
<dbReference type="EMBL" id="DS231708">
    <property type="protein sequence ID" value="KNB10071.1"/>
    <property type="molecule type" value="Genomic_DNA"/>
</dbReference>
<dbReference type="RefSeq" id="XP_018248116.1">
    <property type="nucleotide sequence ID" value="XM_018389785.1"/>
</dbReference>
<dbReference type="SMR" id="A0A0J9VGQ5"/>
<dbReference type="CAZy" id="GT2">
    <property type="family name" value="Glycosyltransferase Family 2"/>
</dbReference>
<dbReference type="GeneID" id="28951922"/>
<dbReference type="KEGG" id="fox:FOXG_10443"/>
<dbReference type="VEuPathDB" id="FungiDB:FOXG_10443"/>
<dbReference type="OrthoDB" id="61099at110618"/>
<dbReference type="BRENDA" id="2.4.1.16">
    <property type="organism ID" value="2351"/>
</dbReference>
<dbReference type="PHI-base" id="PHI:336"/>
<dbReference type="Proteomes" id="UP000009097">
    <property type="component" value="Unassembled WGS sequence"/>
</dbReference>
<dbReference type="GO" id="GO:0030428">
    <property type="term" value="C:cell septum"/>
    <property type="evidence" value="ECO:0007669"/>
    <property type="project" value="TreeGrafter"/>
</dbReference>
<dbReference type="GO" id="GO:0005886">
    <property type="term" value="C:plasma membrane"/>
    <property type="evidence" value="ECO:0007669"/>
    <property type="project" value="UniProtKB-SubCell"/>
</dbReference>
<dbReference type="GO" id="GO:0004100">
    <property type="term" value="F:chitin synthase activity"/>
    <property type="evidence" value="ECO:0007669"/>
    <property type="project" value="UniProtKB-EC"/>
</dbReference>
<dbReference type="GO" id="GO:0006031">
    <property type="term" value="P:chitin biosynthetic process"/>
    <property type="evidence" value="ECO:0007669"/>
    <property type="project" value="InterPro"/>
</dbReference>
<dbReference type="CDD" id="cd04190">
    <property type="entry name" value="Chitin_synth_C"/>
    <property type="match status" value="1"/>
</dbReference>
<dbReference type="InterPro" id="IPR004835">
    <property type="entry name" value="Chitin_synth"/>
</dbReference>
<dbReference type="InterPro" id="IPR004834">
    <property type="entry name" value="Chitin_synth_fun"/>
</dbReference>
<dbReference type="InterPro" id="IPR013616">
    <property type="entry name" value="Chitin_synth_N"/>
</dbReference>
<dbReference type="PANTHER" id="PTHR22914">
    <property type="entry name" value="CHITIN SYNTHASE"/>
    <property type="match status" value="1"/>
</dbReference>
<dbReference type="PANTHER" id="PTHR22914:SF38">
    <property type="entry name" value="CHITIN SYNTHASE 2"/>
    <property type="match status" value="1"/>
</dbReference>
<dbReference type="Pfam" id="PF01644">
    <property type="entry name" value="Chitin_synth_1"/>
    <property type="match status" value="1"/>
</dbReference>
<dbReference type="Pfam" id="PF08407">
    <property type="entry name" value="Chitin_synth_1N"/>
    <property type="match status" value="1"/>
</dbReference>
<protein>
    <recommendedName>
        <fullName evidence="5">Chitin synthase 2</fullName>
        <ecNumber evidence="7">2.4.1.16</ecNumber>
    </recommendedName>
    <alternativeName>
        <fullName evidence="6">Chitin-UDP acetyl-glucosaminyl transferase 2</fullName>
    </alternativeName>
    <alternativeName>
        <fullName evidence="5">Class-II chitin synthase 2</fullName>
    </alternativeName>
</protein>
<feature type="chain" id="PRO_0000460829" description="Chitin synthase 2">
    <location>
        <begin position="1"/>
        <end position="1083"/>
    </location>
</feature>
<feature type="transmembrane region" description="Helical" evidence="1">
    <location>
        <begin position="708"/>
        <end position="728"/>
    </location>
</feature>
<feature type="transmembrane region" description="Helical" evidence="1">
    <location>
        <begin position="747"/>
        <end position="767"/>
    </location>
</feature>
<feature type="transmembrane region" description="Helical" evidence="1">
    <location>
        <begin position="785"/>
        <end position="805"/>
    </location>
</feature>
<feature type="transmembrane region" description="Helical" evidence="1">
    <location>
        <begin position="820"/>
        <end position="840"/>
    </location>
</feature>
<feature type="transmembrane region" description="Helical" evidence="1">
    <location>
        <begin position="860"/>
        <end position="880"/>
    </location>
</feature>
<feature type="transmembrane region" description="Helical" evidence="1">
    <location>
        <begin position="889"/>
        <end position="909"/>
    </location>
</feature>
<feature type="transmembrane region" description="Helical" evidence="1">
    <location>
        <begin position="987"/>
        <end position="1007"/>
    </location>
</feature>
<feature type="transmembrane region" description="Helical" evidence="1">
    <location>
        <begin position="1020"/>
        <end position="1040"/>
    </location>
</feature>
<feature type="region of interest" description="Disordered" evidence="3">
    <location>
        <begin position="1"/>
        <end position="248"/>
    </location>
</feature>
<feature type="region of interest" description="Disordered" evidence="3">
    <location>
        <begin position="260"/>
        <end position="294"/>
    </location>
</feature>
<feature type="compositionally biased region" description="Basic and acidic residues" evidence="3">
    <location>
        <begin position="1"/>
        <end position="10"/>
    </location>
</feature>
<feature type="compositionally biased region" description="Basic and acidic residues" evidence="3">
    <location>
        <begin position="18"/>
        <end position="30"/>
    </location>
</feature>
<feature type="compositionally biased region" description="Polar residues" evidence="3">
    <location>
        <begin position="38"/>
        <end position="49"/>
    </location>
</feature>
<feature type="compositionally biased region" description="Polar residues" evidence="3">
    <location>
        <begin position="61"/>
        <end position="70"/>
    </location>
</feature>
<feature type="compositionally biased region" description="Basic and acidic residues" evidence="3">
    <location>
        <begin position="78"/>
        <end position="100"/>
    </location>
</feature>
<feature type="compositionally biased region" description="Basic and acidic residues" evidence="3">
    <location>
        <begin position="117"/>
        <end position="128"/>
    </location>
</feature>
<feature type="compositionally biased region" description="Polar residues" evidence="3">
    <location>
        <begin position="132"/>
        <end position="148"/>
    </location>
</feature>
<feature type="compositionally biased region" description="Polar residues" evidence="3">
    <location>
        <begin position="177"/>
        <end position="191"/>
    </location>
</feature>
<feature type="compositionally biased region" description="Polar residues" evidence="3">
    <location>
        <begin position="282"/>
        <end position="292"/>
    </location>
</feature>
<feature type="glycosylation site" description="N-linked (GlcNAc...) asparagine" evidence="2">
    <location>
        <position position="23"/>
    </location>
</feature>
<feature type="glycosylation site" description="N-linked (GlcNAc...) asparagine" evidence="2">
    <location>
        <position position="67"/>
    </location>
</feature>
<feature type="glycosylation site" description="N-linked (GlcNAc...) asparagine" evidence="2">
    <location>
        <position position="417"/>
    </location>
</feature>
<feature type="sequence conflict" description="In Ref. 1; AAT77182." evidence="6" ref="1">
    <original>LG</original>
    <variation>SW</variation>
    <location>
        <begin position="928"/>
        <end position="929"/>
    </location>
</feature>
<organism>
    <name type="scientific">Fusarium oxysporum f. sp. lycopersici (strain 4287 / CBS 123668 / FGSC 9935 / NRRL 34936)</name>
    <name type="common">Fusarium vascular wilt of tomato</name>
    <dbReference type="NCBI Taxonomy" id="426428"/>
    <lineage>
        <taxon>Eukaryota</taxon>
        <taxon>Fungi</taxon>
        <taxon>Dikarya</taxon>
        <taxon>Ascomycota</taxon>
        <taxon>Pezizomycotina</taxon>
        <taxon>Sordariomycetes</taxon>
        <taxon>Hypocreomycetidae</taxon>
        <taxon>Hypocreales</taxon>
        <taxon>Nectriaceae</taxon>
        <taxon>Fusarium</taxon>
        <taxon>Fusarium oxysporum species complex</taxon>
    </lineage>
</organism>
<keyword id="KW-1003">Cell membrane</keyword>
<keyword id="KW-0325">Glycoprotein</keyword>
<keyword id="KW-0328">Glycosyltransferase</keyword>
<keyword id="KW-0472">Membrane</keyword>
<keyword id="KW-1185">Reference proteome</keyword>
<keyword id="KW-0808">Transferase</keyword>
<keyword id="KW-0812">Transmembrane</keyword>
<keyword id="KW-1133">Transmembrane helix</keyword>
<evidence type="ECO:0000255" key="1"/>
<evidence type="ECO:0000255" key="2">
    <source>
        <dbReference type="PROSITE-ProRule" id="PRU00498"/>
    </source>
</evidence>
<evidence type="ECO:0000256" key="3">
    <source>
        <dbReference type="SAM" id="MobiDB-lite"/>
    </source>
</evidence>
<evidence type="ECO:0000269" key="4">
    <source>
    </source>
</evidence>
<evidence type="ECO:0000303" key="5">
    <source>
    </source>
</evidence>
<evidence type="ECO:0000305" key="6"/>
<evidence type="ECO:0000305" key="7">
    <source>
    </source>
</evidence>
<gene>
    <name evidence="5" type="primary">chs2</name>
    <name type="ORF">FOXG_10443</name>
</gene>
<reference key="1">
    <citation type="journal article" date="2004" name="Microbiology">
        <title>Role of chitin synthase genes in Fusarium oxysporum.</title>
        <authorList>
            <person name="Martin-Udiroz M."/>
            <person name="Madrid M.P."/>
            <person name="Roncero M.I.G."/>
        </authorList>
    </citation>
    <scope>NUCLEOTIDE SEQUENCE [GENOMIC DNA]</scope>
    <scope>FUNCTION</scope>
    <scope>DISRUPTION PHENOTYPE</scope>
    <source>
        <strain>4287 / CBS 123668 / FGSC 9935 / NRRL 34936</strain>
    </source>
</reference>
<reference key="2">
    <citation type="journal article" date="2010" name="Nature">
        <title>Comparative genomics reveals mobile pathogenicity chromosomes in Fusarium.</title>
        <authorList>
            <person name="Ma L.-J."/>
            <person name="van der Does H.C."/>
            <person name="Borkovich K.A."/>
            <person name="Coleman J.J."/>
            <person name="Daboussi M.-J."/>
            <person name="Di Pietro A."/>
            <person name="Dufresne M."/>
            <person name="Freitag M."/>
            <person name="Grabherr M."/>
            <person name="Henrissat B."/>
            <person name="Houterman P.M."/>
            <person name="Kang S."/>
            <person name="Shim W.-B."/>
            <person name="Woloshuk C."/>
            <person name="Xie X."/>
            <person name="Xu J.-R."/>
            <person name="Antoniw J."/>
            <person name="Baker S.E."/>
            <person name="Bluhm B.H."/>
            <person name="Breakspear A."/>
            <person name="Brown D.W."/>
            <person name="Butchko R.A.E."/>
            <person name="Chapman S."/>
            <person name="Coulson R."/>
            <person name="Coutinho P.M."/>
            <person name="Danchin E.G.J."/>
            <person name="Diener A."/>
            <person name="Gale L.R."/>
            <person name="Gardiner D.M."/>
            <person name="Goff S."/>
            <person name="Hammond-Kosack K.E."/>
            <person name="Hilburn K."/>
            <person name="Hua-Van A."/>
            <person name="Jonkers W."/>
            <person name="Kazan K."/>
            <person name="Kodira C.D."/>
            <person name="Koehrsen M."/>
            <person name="Kumar L."/>
            <person name="Lee Y.-H."/>
            <person name="Li L."/>
            <person name="Manners J.M."/>
            <person name="Miranda-Saavedra D."/>
            <person name="Mukherjee M."/>
            <person name="Park G."/>
            <person name="Park J."/>
            <person name="Park S.-Y."/>
            <person name="Proctor R.H."/>
            <person name="Regev A."/>
            <person name="Ruiz-Roldan M.C."/>
            <person name="Sain D."/>
            <person name="Sakthikumar S."/>
            <person name="Sykes S."/>
            <person name="Schwartz D.C."/>
            <person name="Turgeon B.G."/>
            <person name="Wapinski I."/>
            <person name="Yoder O."/>
            <person name="Young S."/>
            <person name="Zeng Q."/>
            <person name="Zhou S."/>
            <person name="Galagan J."/>
            <person name="Cuomo C.A."/>
            <person name="Kistler H.C."/>
            <person name="Rep M."/>
        </authorList>
    </citation>
    <scope>NUCLEOTIDE SEQUENCE [LARGE SCALE GENOMIC DNA]</scope>
    <source>
        <strain>4287 / CBS 123668 / FGSC 9935 / NRRL 34936</strain>
    </source>
</reference>
<sequence length="1083" mass="122187">MSSEREERTFRSSPVQQDDVRENISNENQEHPSPNPPSYASSMAESQTLLPKRPIIGGQTAKLQNKNRTSVHVAFADLPRDLPEIPDGISDRRRVHKEQQHLGLDTTPPVPPRPLSRLRDVNSHDKLPSIRSPRNLNYQPSVRSSRSGSIFDDAPSMAPPGGSYVSYGMHDDGSPQRPWTPSSRVSGFTRSDLSRPPPSDGMYEPSDLNGSPRPGTPSSRYGGSPRRPLPPAPLFSNSRQPVPPIADDATISIPLHDTYDDDVFAPESDLSDARPHPVDRSSYMSSESQDTLNEGDMEDYDKVEHYGPAPTGAQERRGVRAPQMSRKEVQLINGELVLECKIPTILYSFLPRRGEVEFTHMRYTAVTCDPDDFVERGYTLRQTFGKTVRETELFICVTMYNEDEIGFTRTMHAVMKNISHFCSRSRSRTWGETGWQKIVVCIVSDGREKIHPRTLDALAAMGVYQHGIAKNFVNNRAVQAHVYEYTTQVSLDSDLKFKGAEKGIVPCQMIFCLKEKNQRKLNSHRWFFNAFGKALNPNVCILLDVGTRPSGTSLYHLWKAFDTDSNVAGACGEIKAMKGRLGANLLNPLVASQNFEYKMSNILDKPLESVFGYITVLPGALSAYRYHALQNDETGHGPLSQYFKGETLHGQHADVFTANMYLAEDRILCWELVAKRGERWVLKYVKGCTGETDVPDTVPEFISQRRRWLNGAFFAAVYSLVHFKQIWFTDHTLARKILLHMEFLYQFIQLMFTFFSLANFYLTFYFVAGGLTDPKVDPFGHNIATVIFHILRYACVLLISTQFILSLGNRPQGSKKLYLISMIIYSIIMVYTTFATFYIIIHQLTSKDDKIEMGDNVFTNMIVSILSTIGMYFIMSILYLDPWHMITSSAQYFILLPSYICTLQVYAFCNTHDVTWGTKGDNVMKTDLGGAVGKGETVELEMPSEQLDIDSGYDEALRNLRDRLEVPESPPSESQLQEDYYKSVRTYLVLTWMIGNGILGMAVSEIYSARGIGDNYYLRFLLWSVAALAVFRAIGSTTFAVLNVINMIVEGRVRLSLKAPRWMGGLKERVNDKMSSVSSNLRS</sequence>
<proteinExistence type="inferred from homology"/>
<name>CHS2_FUSO4</name>